<organism>
    <name type="scientific">Macaca fascicularis</name>
    <name type="common">Crab-eating macaque</name>
    <name type="synonym">Cynomolgus monkey</name>
    <dbReference type="NCBI Taxonomy" id="9541"/>
    <lineage>
        <taxon>Eukaryota</taxon>
        <taxon>Metazoa</taxon>
        <taxon>Chordata</taxon>
        <taxon>Craniata</taxon>
        <taxon>Vertebrata</taxon>
        <taxon>Euteleostomi</taxon>
        <taxon>Mammalia</taxon>
        <taxon>Eutheria</taxon>
        <taxon>Euarchontoglires</taxon>
        <taxon>Primates</taxon>
        <taxon>Haplorrhini</taxon>
        <taxon>Catarrhini</taxon>
        <taxon>Cercopithecidae</taxon>
        <taxon>Cercopithecinae</taxon>
        <taxon>Macaca</taxon>
    </lineage>
</organism>
<dbReference type="EC" id="1.3.8.7" evidence="2"/>
<dbReference type="EMBL" id="AB083301">
    <property type="protein sequence ID" value="BAC20580.1"/>
    <property type="molecule type" value="mRNA"/>
</dbReference>
<dbReference type="SMR" id="Q8HXY8"/>
<dbReference type="STRING" id="9541.ENSMFAP00000019385"/>
<dbReference type="eggNOG" id="KOG0140">
    <property type="taxonomic scope" value="Eukaryota"/>
</dbReference>
<dbReference type="UniPathway" id="UPA00660"/>
<dbReference type="Proteomes" id="UP000233100">
    <property type="component" value="Unplaced"/>
</dbReference>
<dbReference type="GO" id="GO:0005759">
    <property type="term" value="C:mitochondrial matrix"/>
    <property type="evidence" value="ECO:0007669"/>
    <property type="project" value="UniProtKB-SubCell"/>
</dbReference>
<dbReference type="GO" id="GO:0003995">
    <property type="term" value="F:acyl-CoA dehydrogenase activity"/>
    <property type="evidence" value="ECO:0000250"/>
    <property type="project" value="UniProtKB"/>
</dbReference>
<dbReference type="GO" id="GO:0050660">
    <property type="term" value="F:flavin adenine dinucleotide binding"/>
    <property type="evidence" value="ECO:0007669"/>
    <property type="project" value="InterPro"/>
</dbReference>
<dbReference type="GO" id="GO:0070991">
    <property type="term" value="F:medium-chain fatty acyl-CoA dehydrogenase activity"/>
    <property type="evidence" value="ECO:0007669"/>
    <property type="project" value="UniProtKB-EC"/>
</dbReference>
<dbReference type="GO" id="GO:0006635">
    <property type="term" value="P:fatty acid beta-oxidation"/>
    <property type="evidence" value="ECO:0000250"/>
    <property type="project" value="UniProtKB"/>
</dbReference>
<dbReference type="GO" id="GO:0033539">
    <property type="term" value="P:fatty acid beta-oxidation using acyl-CoA dehydrogenase"/>
    <property type="evidence" value="ECO:0000250"/>
    <property type="project" value="UniProtKB"/>
</dbReference>
<dbReference type="GO" id="GO:0051793">
    <property type="term" value="P:medium-chain fatty acid catabolic process"/>
    <property type="evidence" value="ECO:0007669"/>
    <property type="project" value="TreeGrafter"/>
</dbReference>
<dbReference type="CDD" id="cd01157">
    <property type="entry name" value="MCAD"/>
    <property type="match status" value="1"/>
</dbReference>
<dbReference type="FunFam" id="1.10.540.10:FF:000010">
    <property type="entry name" value="Medium-chain specific acyl-CoA dehydrogenase, mitochondrial"/>
    <property type="match status" value="1"/>
</dbReference>
<dbReference type="FunFam" id="1.20.140.10:FF:000011">
    <property type="entry name" value="Medium-chain specific acyl-CoA dehydrogenase, mitochondrial"/>
    <property type="match status" value="1"/>
</dbReference>
<dbReference type="FunFam" id="2.40.110.10:FF:000007">
    <property type="entry name" value="Medium-chain specific acyl-CoA dehydrogenase, mitochondrial"/>
    <property type="match status" value="1"/>
</dbReference>
<dbReference type="Gene3D" id="1.10.540.10">
    <property type="entry name" value="Acyl-CoA dehydrogenase/oxidase, N-terminal domain"/>
    <property type="match status" value="1"/>
</dbReference>
<dbReference type="Gene3D" id="2.40.110.10">
    <property type="entry name" value="Butyryl-CoA Dehydrogenase, subunit A, domain 2"/>
    <property type="match status" value="1"/>
</dbReference>
<dbReference type="Gene3D" id="1.20.140.10">
    <property type="entry name" value="Butyryl-CoA Dehydrogenase, subunit A, domain 3"/>
    <property type="match status" value="1"/>
</dbReference>
<dbReference type="InterPro" id="IPR050741">
    <property type="entry name" value="Acyl-CoA_dehydrogenase"/>
</dbReference>
<dbReference type="InterPro" id="IPR006089">
    <property type="entry name" value="Acyl-CoA_DH_CS"/>
</dbReference>
<dbReference type="InterPro" id="IPR006091">
    <property type="entry name" value="Acyl-CoA_Oxase/DH_mid-dom"/>
</dbReference>
<dbReference type="InterPro" id="IPR046373">
    <property type="entry name" value="Acyl-CoA_Oxase/DH_mid-dom_sf"/>
</dbReference>
<dbReference type="InterPro" id="IPR036250">
    <property type="entry name" value="AcylCo_DH-like_C"/>
</dbReference>
<dbReference type="InterPro" id="IPR009075">
    <property type="entry name" value="AcylCo_DH/oxidase_C"/>
</dbReference>
<dbReference type="InterPro" id="IPR013786">
    <property type="entry name" value="AcylCoA_DH/ox_N"/>
</dbReference>
<dbReference type="InterPro" id="IPR037069">
    <property type="entry name" value="AcylCoA_DH/ox_N_sf"/>
</dbReference>
<dbReference type="InterPro" id="IPR009100">
    <property type="entry name" value="AcylCoA_DH/oxidase_NM_dom_sf"/>
</dbReference>
<dbReference type="InterPro" id="IPR034180">
    <property type="entry name" value="MCAD"/>
</dbReference>
<dbReference type="PANTHER" id="PTHR48083:SF2">
    <property type="entry name" value="MEDIUM-CHAIN SPECIFIC ACYL-COA DEHYDROGENASE, MITOCHONDRIAL"/>
    <property type="match status" value="1"/>
</dbReference>
<dbReference type="PANTHER" id="PTHR48083">
    <property type="entry name" value="MEDIUM-CHAIN SPECIFIC ACYL-COA DEHYDROGENASE, MITOCHONDRIAL-RELATED"/>
    <property type="match status" value="1"/>
</dbReference>
<dbReference type="Pfam" id="PF00441">
    <property type="entry name" value="Acyl-CoA_dh_1"/>
    <property type="match status" value="1"/>
</dbReference>
<dbReference type="Pfam" id="PF02770">
    <property type="entry name" value="Acyl-CoA_dh_M"/>
    <property type="match status" value="1"/>
</dbReference>
<dbReference type="Pfam" id="PF02771">
    <property type="entry name" value="Acyl-CoA_dh_N"/>
    <property type="match status" value="1"/>
</dbReference>
<dbReference type="PIRSF" id="PIRSF016578">
    <property type="entry name" value="HsaA"/>
    <property type="match status" value="1"/>
</dbReference>
<dbReference type="SUPFAM" id="SSF47203">
    <property type="entry name" value="Acyl-CoA dehydrogenase C-terminal domain-like"/>
    <property type="match status" value="1"/>
</dbReference>
<dbReference type="SUPFAM" id="SSF56645">
    <property type="entry name" value="Acyl-CoA dehydrogenase NM domain-like"/>
    <property type="match status" value="1"/>
</dbReference>
<dbReference type="PROSITE" id="PS00072">
    <property type="entry name" value="ACYL_COA_DH_1"/>
    <property type="match status" value="1"/>
</dbReference>
<dbReference type="PROSITE" id="PS00073">
    <property type="entry name" value="ACYL_COA_DH_2"/>
    <property type="match status" value="1"/>
</dbReference>
<evidence type="ECO:0000250" key="1">
    <source>
        <dbReference type="UniProtKB" id="P08503"/>
    </source>
</evidence>
<evidence type="ECO:0000250" key="2">
    <source>
        <dbReference type="UniProtKB" id="P11310"/>
    </source>
</evidence>
<evidence type="ECO:0000250" key="3">
    <source>
        <dbReference type="UniProtKB" id="P41367"/>
    </source>
</evidence>
<evidence type="ECO:0000250" key="4">
    <source>
        <dbReference type="UniProtKB" id="P45952"/>
    </source>
</evidence>
<evidence type="ECO:0000305" key="5"/>
<evidence type="ECO:0000312" key="6">
    <source>
        <dbReference type="EMBL" id="BAC20580.1"/>
    </source>
</evidence>
<feature type="transit peptide" description="Mitochondrion" evidence="1">
    <location>
        <begin position="1"/>
        <end position="25"/>
    </location>
</feature>
<feature type="chain" id="PRO_0000000503" description="Medium-chain specific acyl-CoA dehydrogenase, mitochondrial">
    <location>
        <begin position="26"/>
        <end position="421"/>
    </location>
</feature>
<feature type="active site" description="Proton acceptor" evidence="3">
    <location>
        <position position="401"/>
    </location>
</feature>
<feature type="binding site" description="in other chain" evidence="3">
    <location>
        <begin position="158"/>
        <end position="167"/>
    </location>
    <ligand>
        <name>FAD</name>
        <dbReference type="ChEBI" id="CHEBI:57692"/>
        <note>ligand shared between dimeric partners</note>
    </ligand>
</feature>
<feature type="binding site" evidence="3">
    <location>
        <position position="167"/>
    </location>
    <ligand>
        <name>octanoyl-CoA</name>
        <dbReference type="ChEBI" id="CHEBI:57386"/>
    </ligand>
</feature>
<feature type="binding site" description="in other chain" evidence="3">
    <location>
        <begin position="191"/>
        <end position="193"/>
    </location>
    <ligand>
        <name>FAD</name>
        <dbReference type="ChEBI" id="CHEBI:57692"/>
        <note>ligand shared between dimeric partners</note>
    </ligand>
</feature>
<feature type="binding site" evidence="3">
    <location>
        <position position="278"/>
    </location>
    <ligand>
        <name>octanoyl-CoA</name>
        <dbReference type="ChEBI" id="CHEBI:57386"/>
    </ligand>
</feature>
<feature type="binding site" evidence="3">
    <location>
        <position position="281"/>
    </location>
    <ligand>
        <name>octanoyl-CoA</name>
        <dbReference type="ChEBI" id="CHEBI:57386"/>
    </ligand>
</feature>
<feature type="binding site" evidence="3">
    <location>
        <begin position="306"/>
        <end position="308"/>
    </location>
    <ligand>
        <name>FAD</name>
        <dbReference type="ChEBI" id="CHEBI:57692"/>
        <note>ligand shared between dimeric partners</note>
    </ligand>
</feature>
<feature type="binding site" description="in other chain" evidence="3">
    <location>
        <begin position="316"/>
        <end position="317"/>
    </location>
    <ligand>
        <name>FAD</name>
        <dbReference type="ChEBI" id="CHEBI:57692"/>
        <note>ligand shared between dimeric partners</note>
    </ligand>
</feature>
<feature type="binding site" evidence="3">
    <location>
        <position position="349"/>
    </location>
    <ligand>
        <name>octanoyl-CoA</name>
        <dbReference type="ChEBI" id="CHEBI:57386"/>
    </ligand>
</feature>
<feature type="binding site" evidence="3">
    <location>
        <position position="351"/>
    </location>
    <ligand>
        <name>octanoyl-CoA</name>
        <dbReference type="ChEBI" id="CHEBI:57386"/>
    </ligand>
</feature>
<feature type="binding site" evidence="3">
    <location>
        <begin position="374"/>
        <end position="378"/>
    </location>
    <ligand>
        <name>FAD</name>
        <dbReference type="ChEBI" id="CHEBI:57692"/>
        <note>ligand shared between dimeric partners</note>
    </ligand>
</feature>
<feature type="binding site" evidence="3">
    <location>
        <position position="401"/>
    </location>
    <ligand>
        <name>octanoyl-CoA</name>
        <dbReference type="ChEBI" id="CHEBI:57386"/>
    </ligand>
</feature>
<feature type="binding site" description="in other chain" evidence="3">
    <location>
        <begin position="402"/>
        <end position="405"/>
    </location>
    <ligand>
        <name>FAD</name>
        <dbReference type="ChEBI" id="CHEBI:57692"/>
        <note>ligand shared between dimeric partners</note>
    </ligand>
</feature>
<feature type="modified residue" description="N6-acetyllysine; alternate" evidence="4">
    <location>
        <position position="69"/>
    </location>
</feature>
<feature type="modified residue" description="N6-succinyllysine; alternate" evidence="4">
    <location>
        <position position="69"/>
    </location>
</feature>
<feature type="modified residue" description="N6-succinyllysine" evidence="4">
    <location>
        <position position="179"/>
    </location>
</feature>
<feature type="modified residue" description="N6-acetyllysine; alternate" evidence="4">
    <location>
        <position position="212"/>
    </location>
</feature>
<feature type="modified residue" description="N6-succinyllysine; alternate" evidence="4">
    <location>
        <position position="212"/>
    </location>
</feature>
<feature type="modified residue" description="N6-acetyllysine; alternate" evidence="4">
    <location>
        <position position="217"/>
    </location>
</feature>
<feature type="modified residue" description="N6-succinyllysine; alternate" evidence="4">
    <location>
        <position position="217"/>
    </location>
</feature>
<feature type="modified residue" description="N6-acetyllysine; alternate" evidence="4">
    <location>
        <position position="259"/>
    </location>
</feature>
<feature type="modified residue" description="N6-succinyllysine; alternate" evidence="4">
    <location>
        <position position="259"/>
    </location>
</feature>
<feature type="modified residue" description="N6-acetyllysine; alternate" evidence="4">
    <location>
        <position position="271"/>
    </location>
</feature>
<feature type="modified residue" description="N6-succinyllysine; alternate" evidence="4">
    <location>
        <position position="271"/>
    </location>
</feature>
<feature type="modified residue" description="N6-acetyllysine" evidence="2">
    <location>
        <position position="279"/>
    </location>
</feature>
<feature type="modified residue" description="N6-acetyllysine" evidence="2">
    <location>
        <position position="301"/>
    </location>
</feature>
<feature type="modified residue" description="Phosphothreonine" evidence="4">
    <location>
        <position position="351"/>
    </location>
</feature>
<reference key="1">
    <citation type="submission" date="2002-04" db="EMBL/GenBank/DDBJ databases">
        <title>Isolation and characterization of cDNA for macaque neurological disease genes.</title>
        <authorList>
            <person name="Kusuda J."/>
            <person name="Osada N."/>
            <person name="Hida M."/>
            <person name="Sugano S."/>
            <person name="Hashimoto K."/>
        </authorList>
    </citation>
    <scope>NUCLEOTIDE SEQUENCE [LARGE SCALE MRNA]</scope>
    <source>
        <tissue>Temporal cortex</tissue>
    </source>
</reference>
<gene>
    <name evidence="2" type="primary">ACADM</name>
    <name evidence="6" type="ORF">QtrA-12403</name>
</gene>
<sequence length="421" mass="46626">MAAAFGRCCRVLRSISRFHWRSQHTKADRQREPGLGFSFEFTEQQKEFQATARKFAREEIIPVAAEYDKTGEYPVPLIRRAWELGLMNPHIPQNCGGLGLGTFDACLISEELAYGCTGVQTAIEGNSLGQMPIIIAGNEQQKKKYLGRMTEEPLMCAYCVTEPGAGSDVAGIKTKAEKKGDEYIINGQKMWITNGGKASWYFLLARSDPDPKAPANKAFTGFIVEADTPGIQIGRKELNMGQRCSDTRGIVFEDVKVLKENVLIGDGAGFKIAMGAFDKTRPTVSSGAVGLAQRALDEATKYALERKTFGKLLIEHQAISFMLAEMAMKVELARMSYQRAAWEVDSGRRNTYYASIAKAFAGDIANQLATDAVQIFGGNGFNTEYPVEKLMRDAKIYQIYEGTSQIQRLIIAREHIGKYKS</sequence>
<protein>
    <recommendedName>
        <fullName evidence="2">Medium-chain specific acyl-CoA dehydrogenase, mitochondrial</fullName>
        <shortName evidence="2">MCAD</shortName>
        <ecNumber evidence="2">1.3.8.7</ecNumber>
    </recommendedName>
</protein>
<accession>Q8HXY8</accession>
<name>ACADM_MACFA</name>
<comment type="function">
    <text evidence="2">Medium-chain specific acyl-CoA dehydrogenase is one of the acyl-CoA dehydrogenases that catalyze the first step of mitochondrial fatty acid beta-oxidation, an aerobic process breaking down fatty acids into acetyl-CoA and allowing the production of energy from fats. The first step of fatty acid beta-oxidation consists in the removal of one hydrogen from C-2 and C-3 of the straight-chain fatty acyl-CoA thioester, resulting in the formation of trans-2-enoyl-CoA. Electron transfer flavoprotein (ETF) is the electron acceptor that transfers electrons to the main mitochondrial respiratory chain via ETF-ubiquinone oxidoreductase (ETF dehydrogenase). Among the different mitochondrial acyl-CoA dehydrogenases, medium-chain specific acyl-CoA dehydrogenase acts specifically on acyl-CoAs with saturated 6 to 12 carbons long primary chains.</text>
</comment>
<comment type="catalytic activity">
    <reaction evidence="2">
        <text>a medium-chain 2,3-saturated fatty acyl-CoA + oxidized [electron-transfer flavoprotein] + H(+) = a medium-chain (2E)-enoyl-CoA + reduced [electron-transfer flavoprotein]</text>
        <dbReference type="Rhea" id="RHEA:14477"/>
        <dbReference type="Rhea" id="RHEA-COMP:10685"/>
        <dbReference type="Rhea" id="RHEA-COMP:10686"/>
        <dbReference type="ChEBI" id="CHEBI:15378"/>
        <dbReference type="ChEBI" id="CHEBI:57692"/>
        <dbReference type="ChEBI" id="CHEBI:58307"/>
        <dbReference type="ChEBI" id="CHEBI:83723"/>
        <dbReference type="ChEBI" id="CHEBI:83726"/>
        <dbReference type="EC" id="1.3.8.7"/>
    </reaction>
    <physiologicalReaction direction="left-to-right" evidence="2">
        <dbReference type="Rhea" id="RHEA:14478"/>
    </physiologicalReaction>
</comment>
<comment type="catalytic activity">
    <reaction evidence="1">
        <text>pentanoyl-CoA + oxidized [electron-transfer flavoprotein] + H(+) = (2E)-pentenoyl-CoA + reduced [electron-transfer flavoprotein]</text>
        <dbReference type="Rhea" id="RHEA:43456"/>
        <dbReference type="Rhea" id="RHEA-COMP:10685"/>
        <dbReference type="Rhea" id="RHEA-COMP:10686"/>
        <dbReference type="ChEBI" id="CHEBI:15378"/>
        <dbReference type="ChEBI" id="CHEBI:57389"/>
        <dbReference type="ChEBI" id="CHEBI:57692"/>
        <dbReference type="ChEBI" id="CHEBI:58307"/>
        <dbReference type="ChEBI" id="CHEBI:86160"/>
    </reaction>
    <physiologicalReaction direction="left-to-right" evidence="1">
        <dbReference type="Rhea" id="RHEA:43457"/>
    </physiologicalReaction>
</comment>
<comment type="catalytic activity">
    <reaction evidence="2">
        <text>hexanoyl-CoA + oxidized [electron-transfer flavoprotein] + H(+) = (2E)-hexenoyl-CoA + reduced [electron-transfer flavoprotein]</text>
        <dbReference type="Rhea" id="RHEA:43464"/>
        <dbReference type="Rhea" id="RHEA-COMP:10685"/>
        <dbReference type="Rhea" id="RHEA-COMP:10686"/>
        <dbReference type="ChEBI" id="CHEBI:15378"/>
        <dbReference type="ChEBI" id="CHEBI:57692"/>
        <dbReference type="ChEBI" id="CHEBI:58307"/>
        <dbReference type="ChEBI" id="CHEBI:62077"/>
        <dbReference type="ChEBI" id="CHEBI:62620"/>
    </reaction>
    <physiologicalReaction direction="left-to-right" evidence="2">
        <dbReference type="Rhea" id="RHEA:43465"/>
    </physiologicalReaction>
</comment>
<comment type="catalytic activity">
    <reaction evidence="2">
        <text>octanoyl-CoA + oxidized [electron-transfer flavoprotein] + H(+) = (2E)-octenoyl-CoA + reduced [electron-transfer flavoprotein]</text>
        <dbReference type="Rhea" id="RHEA:48180"/>
        <dbReference type="Rhea" id="RHEA-COMP:10685"/>
        <dbReference type="Rhea" id="RHEA-COMP:10686"/>
        <dbReference type="ChEBI" id="CHEBI:15378"/>
        <dbReference type="ChEBI" id="CHEBI:57386"/>
        <dbReference type="ChEBI" id="CHEBI:57692"/>
        <dbReference type="ChEBI" id="CHEBI:58307"/>
        <dbReference type="ChEBI" id="CHEBI:62242"/>
    </reaction>
    <physiologicalReaction direction="left-to-right" evidence="2">
        <dbReference type="Rhea" id="RHEA:48181"/>
    </physiologicalReaction>
</comment>
<comment type="catalytic activity">
    <reaction evidence="2">
        <text>decanoyl-CoA + oxidized [electron-transfer flavoprotein] + H(+) = (2E)-decenoyl-CoA + reduced [electron-transfer flavoprotein]</text>
        <dbReference type="Rhea" id="RHEA:48176"/>
        <dbReference type="Rhea" id="RHEA-COMP:10685"/>
        <dbReference type="Rhea" id="RHEA-COMP:10686"/>
        <dbReference type="ChEBI" id="CHEBI:15378"/>
        <dbReference type="ChEBI" id="CHEBI:57692"/>
        <dbReference type="ChEBI" id="CHEBI:58307"/>
        <dbReference type="ChEBI" id="CHEBI:61406"/>
        <dbReference type="ChEBI" id="CHEBI:61430"/>
    </reaction>
    <physiologicalReaction direction="left-to-right" evidence="2">
        <dbReference type="Rhea" id="RHEA:48177"/>
    </physiologicalReaction>
</comment>
<comment type="catalytic activity">
    <reaction evidence="2">
        <text>dodecanoyl-CoA + oxidized [electron-transfer flavoprotein] + H(+) = (2E)-dodecenoyl-CoA + reduced [electron-transfer flavoprotein]</text>
        <dbReference type="Rhea" id="RHEA:47296"/>
        <dbReference type="Rhea" id="RHEA-COMP:10685"/>
        <dbReference type="Rhea" id="RHEA-COMP:10686"/>
        <dbReference type="ChEBI" id="CHEBI:15378"/>
        <dbReference type="ChEBI" id="CHEBI:57330"/>
        <dbReference type="ChEBI" id="CHEBI:57375"/>
        <dbReference type="ChEBI" id="CHEBI:57692"/>
        <dbReference type="ChEBI" id="CHEBI:58307"/>
    </reaction>
    <physiologicalReaction direction="left-to-right" evidence="2">
        <dbReference type="Rhea" id="RHEA:47297"/>
    </physiologicalReaction>
</comment>
<comment type="catalytic activity">
    <reaction evidence="2">
        <text>tetradecanoyl-CoA + oxidized [electron-transfer flavoprotein] + H(+) = (2E)-tetradecenoyl-CoA + reduced [electron-transfer flavoprotein]</text>
        <dbReference type="Rhea" id="RHEA:47316"/>
        <dbReference type="Rhea" id="RHEA-COMP:10685"/>
        <dbReference type="Rhea" id="RHEA-COMP:10686"/>
        <dbReference type="ChEBI" id="CHEBI:15378"/>
        <dbReference type="ChEBI" id="CHEBI:57385"/>
        <dbReference type="ChEBI" id="CHEBI:57692"/>
        <dbReference type="ChEBI" id="CHEBI:58307"/>
        <dbReference type="ChEBI" id="CHEBI:61405"/>
    </reaction>
    <physiologicalReaction direction="left-to-right" evidence="2">
        <dbReference type="Rhea" id="RHEA:47317"/>
    </physiologicalReaction>
</comment>
<comment type="catalytic activity">
    <reaction evidence="2">
        <text>oxidized [electron-transfer flavoprotein] + hexadecanoyl-CoA + H(+) = (2E)-hexadecenoyl-CoA + reduced [electron-transfer flavoprotein]</text>
        <dbReference type="Rhea" id="RHEA:43448"/>
        <dbReference type="Rhea" id="RHEA-COMP:10685"/>
        <dbReference type="Rhea" id="RHEA-COMP:10686"/>
        <dbReference type="ChEBI" id="CHEBI:15378"/>
        <dbReference type="ChEBI" id="CHEBI:57379"/>
        <dbReference type="ChEBI" id="CHEBI:57692"/>
        <dbReference type="ChEBI" id="CHEBI:58307"/>
        <dbReference type="ChEBI" id="CHEBI:61526"/>
    </reaction>
    <physiologicalReaction direction="left-to-right" evidence="2">
        <dbReference type="Rhea" id="RHEA:43449"/>
    </physiologicalReaction>
</comment>
<comment type="cofactor">
    <cofactor evidence="2">
        <name>FAD</name>
        <dbReference type="ChEBI" id="CHEBI:57692"/>
    </cofactor>
</comment>
<comment type="pathway">
    <text evidence="2">Lipid metabolism; mitochondrial fatty acid beta-oxidation.</text>
</comment>
<comment type="subunit">
    <text evidence="2">Homotetramer. Interacts with the heterodimeric electron transfer flavoprotein ETF.</text>
</comment>
<comment type="subcellular location">
    <subcellularLocation>
        <location evidence="1">Mitochondrion matrix</location>
    </subcellularLocation>
</comment>
<comment type="PTM">
    <text evidence="2">Acetylated. Could occur at proximity of the cofactor-binding sites and reduce the catalytic activity. Could be deacetylated by SIRT3.</text>
</comment>
<comment type="similarity">
    <text evidence="5">Belongs to the acyl-CoA dehydrogenase family.</text>
</comment>
<proteinExistence type="evidence at transcript level"/>
<keyword id="KW-0007">Acetylation</keyword>
<keyword id="KW-0274">FAD</keyword>
<keyword id="KW-0276">Fatty acid metabolism</keyword>
<keyword id="KW-0285">Flavoprotein</keyword>
<keyword id="KW-0443">Lipid metabolism</keyword>
<keyword id="KW-0496">Mitochondrion</keyword>
<keyword id="KW-0560">Oxidoreductase</keyword>
<keyword id="KW-0597">Phosphoprotein</keyword>
<keyword id="KW-1185">Reference proteome</keyword>
<keyword id="KW-0809">Transit peptide</keyword>